<name>TRMFO_SINMW</name>
<organism>
    <name type="scientific">Sinorhizobium medicae (strain WSM419)</name>
    <name type="common">Ensifer medicae</name>
    <dbReference type="NCBI Taxonomy" id="366394"/>
    <lineage>
        <taxon>Bacteria</taxon>
        <taxon>Pseudomonadati</taxon>
        <taxon>Pseudomonadota</taxon>
        <taxon>Alphaproteobacteria</taxon>
        <taxon>Hyphomicrobiales</taxon>
        <taxon>Rhizobiaceae</taxon>
        <taxon>Sinorhizobium/Ensifer group</taxon>
        <taxon>Sinorhizobium</taxon>
    </lineage>
</organism>
<accession>A6U8P9</accession>
<gene>
    <name evidence="1" type="primary">trmFO</name>
    <name type="synonym">gid</name>
    <name type="ordered locus">Smed_1178</name>
</gene>
<feature type="chain" id="PRO_1000063928" description="Methylenetetrahydrofolate--tRNA-(uracil-5-)-methyltransferase TrmFO">
    <location>
        <begin position="1"/>
        <end position="480"/>
    </location>
</feature>
<feature type="binding site" evidence="1">
    <location>
        <begin position="15"/>
        <end position="20"/>
    </location>
    <ligand>
        <name>FAD</name>
        <dbReference type="ChEBI" id="CHEBI:57692"/>
    </ligand>
</feature>
<protein>
    <recommendedName>
        <fullName evidence="1">Methylenetetrahydrofolate--tRNA-(uracil-5-)-methyltransferase TrmFO</fullName>
        <ecNumber evidence="1">2.1.1.74</ecNumber>
    </recommendedName>
    <alternativeName>
        <fullName evidence="1">Folate-dependent tRNA (uracil-5-)-methyltransferase</fullName>
    </alternativeName>
    <alternativeName>
        <fullName evidence="1">Folate-dependent tRNA(M-5-U54)-methyltransferase</fullName>
    </alternativeName>
</protein>
<keyword id="KW-0963">Cytoplasm</keyword>
<keyword id="KW-0274">FAD</keyword>
<keyword id="KW-0285">Flavoprotein</keyword>
<keyword id="KW-0489">Methyltransferase</keyword>
<keyword id="KW-0520">NAD</keyword>
<keyword id="KW-0521">NADP</keyword>
<keyword id="KW-0808">Transferase</keyword>
<keyword id="KW-0819">tRNA processing</keyword>
<reference key="1">
    <citation type="submission" date="2007-06" db="EMBL/GenBank/DDBJ databases">
        <title>Complete sequence of Sinorhizobium medicae WSM419 chromosome.</title>
        <authorList>
            <consortium name="US DOE Joint Genome Institute"/>
            <person name="Copeland A."/>
            <person name="Lucas S."/>
            <person name="Lapidus A."/>
            <person name="Barry K."/>
            <person name="Glavina del Rio T."/>
            <person name="Dalin E."/>
            <person name="Tice H."/>
            <person name="Pitluck S."/>
            <person name="Chain P."/>
            <person name="Malfatti S."/>
            <person name="Shin M."/>
            <person name="Vergez L."/>
            <person name="Schmutz J."/>
            <person name="Larimer F."/>
            <person name="Land M."/>
            <person name="Hauser L."/>
            <person name="Kyrpides N."/>
            <person name="Mikhailova N."/>
            <person name="Reeve W.G."/>
            <person name="Richardson P."/>
        </authorList>
    </citation>
    <scope>NUCLEOTIDE SEQUENCE [LARGE SCALE GENOMIC DNA]</scope>
    <source>
        <strain>WSM419</strain>
    </source>
</reference>
<dbReference type="EC" id="2.1.1.74" evidence="1"/>
<dbReference type="EMBL" id="CP000738">
    <property type="protein sequence ID" value="ABR60029.1"/>
    <property type="molecule type" value="Genomic_DNA"/>
</dbReference>
<dbReference type="RefSeq" id="WP_011975348.1">
    <property type="nucleotide sequence ID" value="NC_009636.1"/>
</dbReference>
<dbReference type="RefSeq" id="YP_001326864.1">
    <property type="nucleotide sequence ID" value="NC_009636.1"/>
</dbReference>
<dbReference type="SMR" id="A6U8P9"/>
<dbReference type="STRING" id="366394.Smed_1178"/>
<dbReference type="KEGG" id="smd:Smed_1178"/>
<dbReference type="PATRIC" id="fig|366394.8.peg.4305"/>
<dbReference type="eggNOG" id="COG1206">
    <property type="taxonomic scope" value="Bacteria"/>
</dbReference>
<dbReference type="HOGENOM" id="CLU_033057_1_0_5"/>
<dbReference type="OrthoDB" id="9803114at2"/>
<dbReference type="Proteomes" id="UP000001108">
    <property type="component" value="Chromosome"/>
</dbReference>
<dbReference type="GO" id="GO:0005829">
    <property type="term" value="C:cytosol"/>
    <property type="evidence" value="ECO:0007669"/>
    <property type="project" value="TreeGrafter"/>
</dbReference>
<dbReference type="GO" id="GO:0050660">
    <property type="term" value="F:flavin adenine dinucleotide binding"/>
    <property type="evidence" value="ECO:0007669"/>
    <property type="project" value="UniProtKB-UniRule"/>
</dbReference>
<dbReference type="GO" id="GO:0047151">
    <property type="term" value="F:tRNA (uracil(54)-C5)-methyltransferase activity, 5,10-methylenetetrahydrofolate-dependent"/>
    <property type="evidence" value="ECO:0007669"/>
    <property type="project" value="UniProtKB-UniRule"/>
</dbReference>
<dbReference type="GO" id="GO:0030488">
    <property type="term" value="P:tRNA methylation"/>
    <property type="evidence" value="ECO:0007669"/>
    <property type="project" value="TreeGrafter"/>
</dbReference>
<dbReference type="GO" id="GO:0002098">
    <property type="term" value="P:tRNA wobble uridine modification"/>
    <property type="evidence" value="ECO:0007669"/>
    <property type="project" value="TreeGrafter"/>
</dbReference>
<dbReference type="Gene3D" id="3.50.50.60">
    <property type="entry name" value="FAD/NAD(P)-binding domain"/>
    <property type="match status" value="2"/>
</dbReference>
<dbReference type="HAMAP" id="MF_01037">
    <property type="entry name" value="TrmFO"/>
    <property type="match status" value="1"/>
</dbReference>
<dbReference type="InterPro" id="IPR036188">
    <property type="entry name" value="FAD/NAD-bd_sf"/>
</dbReference>
<dbReference type="InterPro" id="IPR002218">
    <property type="entry name" value="MnmG-rel"/>
</dbReference>
<dbReference type="InterPro" id="IPR020595">
    <property type="entry name" value="MnmG-rel_CS"/>
</dbReference>
<dbReference type="InterPro" id="IPR040131">
    <property type="entry name" value="MnmG_N"/>
</dbReference>
<dbReference type="InterPro" id="IPR004417">
    <property type="entry name" value="TrmFO"/>
</dbReference>
<dbReference type="NCBIfam" id="TIGR00137">
    <property type="entry name" value="gid_trmFO"/>
    <property type="match status" value="1"/>
</dbReference>
<dbReference type="NCBIfam" id="NF003739">
    <property type="entry name" value="PRK05335.1"/>
    <property type="match status" value="1"/>
</dbReference>
<dbReference type="PANTHER" id="PTHR11806">
    <property type="entry name" value="GLUCOSE INHIBITED DIVISION PROTEIN A"/>
    <property type="match status" value="1"/>
</dbReference>
<dbReference type="PANTHER" id="PTHR11806:SF2">
    <property type="entry name" value="METHYLENETETRAHYDROFOLATE--TRNA-(URACIL-5-)-METHYLTRANSFERASE TRMFO"/>
    <property type="match status" value="1"/>
</dbReference>
<dbReference type="Pfam" id="PF01134">
    <property type="entry name" value="GIDA"/>
    <property type="match status" value="1"/>
</dbReference>
<dbReference type="SUPFAM" id="SSF51905">
    <property type="entry name" value="FAD/NAD(P)-binding domain"/>
    <property type="match status" value="1"/>
</dbReference>
<dbReference type="PROSITE" id="PS01281">
    <property type="entry name" value="GIDA_2"/>
    <property type="match status" value="1"/>
</dbReference>
<sequence>MNKLTSSYSPVHVIGGGLAGSEAAWQIAEAGVPVILHEMRGVRGTDAHKTDSLAELVCSNSFRSDDATSNAVGVLHAEMRLAGSIIMRCADLNQVPAGGALAVDREGFAEAVSAAIAAHPLITVLREEIRGLPPKEWDLAIIATGPLTAPDLADAIRAETGADALAFFDAIAPIVHADTIDMDICWHQSRYDKVGPGGTGKDYINCPLTQEEYNAFIDALIAGDKTGFKEWEGTPYFDGCLPIEVMAERGRETLRHGPMKPMGLTNAHNPSVKPYAVVQLRQDNALGTLYNMVGFQTKLKYGAQGEVFRMIPGLEKAEFARLGGLHRNTYINSPTLLDQSLTLKSRAGLRFAGQITGCEGYVESASIGLLAGRFAAAERKGASPAIPPVTTAFGALLNHITGGHIVSDDEPGKRSFQPMNVNFGLFPPLDPGALTRPEGAKRFRGKEKASAKKQAMASRALSDCATWLDKNLLIGGAATR</sequence>
<proteinExistence type="inferred from homology"/>
<evidence type="ECO:0000255" key="1">
    <source>
        <dbReference type="HAMAP-Rule" id="MF_01037"/>
    </source>
</evidence>
<comment type="function">
    <text evidence="1">Catalyzes the folate-dependent formation of 5-methyl-uridine at position 54 (M-5-U54) in all tRNAs.</text>
</comment>
<comment type="catalytic activity">
    <reaction evidence="1">
        <text>uridine(54) in tRNA + (6R)-5,10-methylene-5,6,7,8-tetrahydrofolate + NADH + H(+) = 5-methyluridine(54) in tRNA + (6S)-5,6,7,8-tetrahydrofolate + NAD(+)</text>
        <dbReference type="Rhea" id="RHEA:16873"/>
        <dbReference type="Rhea" id="RHEA-COMP:10167"/>
        <dbReference type="Rhea" id="RHEA-COMP:10193"/>
        <dbReference type="ChEBI" id="CHEBI:15378"/>
        <dbReference type="ChEBI" id="CHEBI:15636"/>
        <dbReference type="ChEBI" id="CHEBI:57453"/>
        <dbReference type="ChEBI" id="CHEBI:57540"/>
        <dbReference type="ChEBI" id="CHEBI:57945"/>
        <dbReference type="ChEBI" id="CHEBI:65315"/>
        <dbReference type="ChEBI" id="CHEBI:74447"/>
        <dbReference type="EC" id="2.1.1.74"/>
    </reaction>
</comment>
<comment type="catalytic activity">
    <reaction evidence="1">
        <text>uridine(54) in tRNA + (6R)-5,10-methylene-5,6,7,8-tetrahydrofolate + NADPH + H(+) = 5-methyluridine(54) in tRNA + (6S)-5,6,7,8-tetrahydrofolate + NADP(+)</text>
        <dbReference type="Rhea" id="RHEA:62372"/>
        <dbReference type="Rhea" id="RHEA-COMP:10167"/>
        <dbReference type="Rhea" id="RHEA-COMP:10193"/>
        <dbReference type="ChEBI" id="CHEBI:15378"/>
        <dbReference type="ChEBI" id="CHEBI:15636"/>
        <dbReference type="ChEBI" id="CHEBI:57453"/>
        <dbReference type="ChEBI" id="CHEBI:57783"/>
        <dbReference type="ChEBI" id="CHEBI:58349"/>
        <dbReference type="ChEBI" id="CHEBI:65315"/>
        <dbReference type="ChEBI" id="CHEBI:74447"/>
        <dbReference type="EC" id="2.1.1.74"/>
    </reaction>
</comment>
<comment type="cofactor">
    <cofactor evidence="1">
        <name>FAD</name>
        <dbReference type="ChEBI" id="CHEBI:57692"/>
    </cofactor>
</comment>
<comment type="subcellular location">
    <subcellularLocation>
        <location evidence="1">Cytoplasm</location>
    </subcellularLocation>
</comment>
<comment type="similarity">
    <text evidence="1">Belongs to the MnmG family. TrmFO subfamily.</text>
</comment>